<dbReference type="EC" id="6.3.2.6" evidence="1"/>
<dbReference type="EMBL" id="BA000045">
    <property type="protein sequence ID" value="BAC89857.1"/>
    <property type="molecule type" value="Genomic_DNA"/>
</dbReference>
<dbReference type="RefSeq" id="NP_924862.1">
    <property type="nucleotide sequence ID" value="NC_005125.1"/>
</dbReference>
<dbReference type="RefSeq" id="WP_011141914.1">
    <property type="nucleotide sequence ID" value="NC_005125.1"/>
</dbReference>
<dbReference type="SMR" id="Q7NJB6"/>
<dbReference type="FunCoup" id="Q7NJB6">
    <property type="interactions" value="256"/>
</dbReference>
<dbReference type="STRING" id="251221.gene:10759408"/>
<dbReference type="EnsemblBacteria" id="BAC89857">
    <property type="protein sequence ID" value="BAC89857"/>
    <property type="gene ID" value="BAC89857"/>
</dbReference>
<dbReference type="KEGG" id="gvi:glr1916"/>
<dbReference type="PATRIC" id="fig|251221.4.peg.1949"/>
<dbReference type="eggNOG" id="COG0152">
    <property type="taxonomic scope" value="Bacteria"/>
</dbReference>
<dbReference type="HOGENOM" id="CLU_061495_2_0_3"/>
<dbReference type="InParanoid" id="Q7NJB6"/>
<dbReference type="OrthoDB" id="9801549at2"/>
<dbReference type="PhylomeDB" id="Q7NJB6"/>
<dbReference type="UniPathway" id="UPA00074">
    <property type="reaction ID" value="UER00131"/>
</dbReference>
<dbReference type="Proteomes" id="UP000000557">
    <property type="component" value="Chromosome"/>
</dbReference>
<dbReference type="GO" id="GO:0005524">
    <property type="term" value="F:ATP binding"/>
    <property type="evidence" value="ECO:0007669"/>
    <property type="project" value="UniProtKB-KW"/>
</dbReference>
<dbReference type="GO" id="GO:0004639">
    <property type="term" value="F:phosphoribosylaminoimidazolesuccinocarboxamide synthase activity"/>
    <property type="evidence" value="ECO:0007669"/>
    <property type="project" value="UniProtKB-UniRule"/>
</dbReference>
<dbReference type="GO" id="GO:0006189">
    <property type="term" value="P:'de novo' IMP biosynthetic process"/>
    <property type="evidence" value="ECO:0007669"/>
    <property type="project" value="UniProtKB-UniRule"/>
</dbReference>
<dbReference type="GO" id="GO:0009236">
    <property type="term" value="P:cobalamin biosynthetic process"/>
    <property type="evidence" value="ECO:0007669"/>
    <property type="project" value="InterPro"/>
</dbReference>
<dbReference type="CDD" id="cd01415">
    <property type="entry name" value="SAICAR_synt_PurC"/>
    <property type="match status" value="1"/>
</dbReference>
<dbReference type="FunFam" id="3.30.470.20:FF:000006">
    <property type="entry name" value="Phosphoribosylaminoimidazole-succinocarboxamide synthase"/>
    <property type="match status" value="1"/>
</dbReference>
<dbReference type="Gene3D" id="3.30.470.20">
    <property type="entry name" value="ATP-grasp fold, B domain"/>
    <property type="match status" value="1"/>
</dbReference>
<dbReference type="Gene3D" id="3.30.200.20">
    <property type="entry name" value="Phosphorylase Kinase, domain 1"/>
    <property type="match status" value="1"/>
</dbReference>
<dbReference type="HAMAP" id="MF_00137">
    <property type="entry name" value="SAICAR_synth"/>
    <property type="match status" value="1"/>
</dbReference>
<dbReference type="InterPro" id="IPR028923">
    <property type="entry name" value="SAICAR_synt/ADE2_N"/>
</dbReference>
<dbReference type="InterPro" id="IPR033934">
    <property type="entry name" value="SAICAR_synt_PurC"/>
</dbReference>
<dbReference type="InterPro" id="IPR001636">
    <property type="entry name" value="SAICAR_synth"/>
</dbReference>
<dbReference type="InterPro" id="IPR050089">
    <property type="entry name" value="SAICAR_synthetase"/>
</dbReference>
<dbReference type="InterPro" id="IPR018236">
    <property type="entry name" value="SAICAR_synthetase_CS"/>
</dbReference>
<dbReference type="NCBIfam" id="TIGR00081">
    <property type="entry name" value="purC"/>
    <property type="match status" value="1"/>
</dbReference>
<dbReference type="PANTHER" id="PTHR43599">
    <property type="entry name" value="MULTIFUNCTIONAL PROTEIN ADE2"/>
    <property type="match status" value="1"/>
</dbReference>
<dbReference type="PANTHER" id="PTHR43599:SF3">
    <property type="entry name" value="SI:DKEY-6E2.2"/>
    <property type="match status" value="1"/>
</dbReference>
<dbReference type="Pfam" id="PF01259">
    <property type="entry name" value="SAICAR_synt"/>
    <property type="match status" value="1"/>
</dbReference>
<dbReference type="SUPFAM" id="SSF56104">
    <property type="entry name" value="SAICAR synthase-like"/>
    <property type="match status" value="1"/>
</dbReference>
<dbReference type="PROSITE" id="PS01057">
    <property type="entry name" value="SAICAR_SYNTHETASE_1"/>
    <property type="match status" value="1"/>
</dbReference>
<name>PUR7_GLOVI</name>
<gene>
    <name evidence="1" type="primary">purC</name>
    <name type="ordered locus">glr1916</name>
</gene>
<accession>Q7NJB6</accession>
<protein>
    <recommendedName>
        <fullName evidence="1">Phosphoribosylaminoimidazole-succinocarboxamide synthase</fullName>
        <ecNumber evidence="1">6.3.2.6</ecNumber>
    </recommendedName>
    <alternativeName>
        <fullName evidence="1">SAICAR synthetase</fullName>
    </alternativeName>
</protein>
<sequence length="247" mass="27165">MILQPGAWAVADILYEGKAKIIYPTPDPAIVLAVFKDDATAFNAQKRGTISGKGAVNATVSAKLFLLLERSGVPTHYIDQPAANQLLFRRLKMIPLEVVVRNIVAGSLAKRTGLASGTVLGEAIVEFYYKNDALGDPLLNDEHILKVLTTVDALQLAELRRSALQVNAILSAFYRECGIRLVDFKLEYGYDGAGQLQLGDELSPDNCRLWTLEEDRILDKDRFRFDMGEVEGAYQEVLARVIAKAGP</sequence>
<reference key="1">
    <citation type="journal article" date="2003" name="DNA Res.">
        <title>Complete genome structure of Gloeobacter violaceus PCC 7421, a cyanobacterium that lacks thylakoids.</title>
        <authorList>
            <person name="Nakamura Y."/>
            <person name="Kaneko T."/>
            <person name="Sato S."/>
            <person name="Mimuro M."/>
            <person name="Miyashita H."/>
            <person name="Tsuchiya T."/>
            <person name="Sasamoto S."/>
            <person name="Watanabe A."/>
            <person name="Kawashima K."/>
            <person name="Kishida Y."/>
            <person name="Kiyokawa C."/>
            <person name="Kohara M."/>
            <person name="Matsumoto M."/>
            <person name="Matsuno A."/>
            <person name="Nakazaki N."/>
            <person name="Shimpo S."/>
            <person name="Takeuchi C."/>
            <person name="Yamada M."/>
            <person name="Tabata S."/>
        </authorList>
    </citation>
    <scope>NUCLEOTIDE SEQUENCE [LARGE SCALE GENOMIC DNA]</scope>
    <source>
        <strain>ATCC 29082 / PCC 7421</strain>
    </source>
</reference>
<comment type="catalytic activity">
    <reaction evidence="1">
        <text>5-amino-1-(5-phospho-D-ribosyl)imidazole-4-carboxylate + L-aspartate + ATP = (2S)-2-[5-amino-1-(5-phospho-beta-D-ribosyl)imidazole-4-carboxamido]succinate + ADP + phosphate + 2 H(+)</text>
        <dbReference type="Rhea" id="RHEA:22628"/>
        <dbReference type="ChEBI" id="CHEBI:15378"/>
        <dbReference type="ChEBI" id="CHEBI:29991"/>
        <dbReference type="ChEBI" id="CHEBI:30616"/>
        <dbReference type="ChEBI" id="CHEBI:43474"/>
        <dbReference type="ChEBI" id="CHEBI:58443"/>
        <dbReference type="ChEBI" id="CHEBI:77657"/>
        <dbReference type="ChEBI" id="CHEBI:456216"/>
        <dbReference type="EC" id="6.3.2.6"/>
    </reaction>
</comment>
<comment type="pathway">
    <text evidence="1">Purine metabolism; IMP biosynthesis via de novo pathway; 5-amino-1-(5-phospho-D-ribosyl)imidazole-4-carboxamide from 5-amino-1-(5-phospho-D-ribosyl)imidazole-4-carboxylate: step 1/2.</text>
</comment>
<comment type="similarity">
    <text evidence="1">Belongs to the SAICAR synthetase family.</text>
</comment>
<evidence type="ECO:0000255" key="1">
    <source>
        <dbReference type="HAMAP-Rule" id="MF_00137"/>
    </source>
</evidence>
<organism>
    <name type="scientific">Gloeobacter violaceus (strain ATCC 29082 / PCC 7421)</name>
    <dbReference type="NCBI Taxonomy" id="251221"/>
    <lineage>
        <taxon>Bacteria</taxon>
        <taxon>Bacillati</taxon>
        <taxon>Cyanobacteriota</taxon>
        <taxon>Cyanophyceae</taxon>
        <taxon>Gloeobacterales</taxon>
        <taxon>Gloeobacteraceae</taxon>
        <taxon>Gloeobacter</taxon>
    </lineage>
</organism>
<proteinExistence type="inferred from homology"/>
<keyword id="KW-0067">ATP-binding</keyword>
<keyword id="KW-0436">Ligase</keyword>
<keyword id="KW-0547">Nucleotide-binding</keyword>
<keyword id="KW-0658">Purine biosynthesis</keyword>
<keyword id="KW-1185">Reference proteome</keyword>
<feature type="chain" id="PRO_0000100830" description="Phosphoribosylaminoimidazole-succinocarboxamide synthase">
    <location>
        <begin position="1"/>
        <end position="247"/>
    </location>
</feature>